<reference key="1">
    <citation type="journal article" date="2004" name="Proc. Natl. Acad. Sci. U.S.A.">
        <title>The louse-borne human pathogen Bartonella quintana is a genomic derivative of the zoonotic agent Bartonella henselae.</title>
        <authorList>
            <person name="Alsmark U.C.M."/>
            <person name="Frank A.C."/>
            <person name="Karlberg E.O."/>
            <person name="Legault B.-A."/>
            <person name="Ardell D.H."/>
            <person name="Canbaeck B."/>
            <person name="Eriksson A.-S."/>
            <person name="Naeslund A.K."/>
            <person name="Handley S.A."/>
            <person name="Huvet M."/>
            <person name="La Scola B."/>
            <person name="Holmberg M."/>
            <person name="Andersson S.G.E."/>
        </authorList>
    </citation>
    <scope>NUCLEOTIDE SEQUENCE [LARGE SCALE GENOMIC DNA]</scope>
    <source>
        <strain>ATCC 49882 / DSM 28221 / CCUG 30454 / Houston 1</strain>
    </source>
</reference>
<evidence type="ECO:0000255" key="1">
    <source>
        <dbReference type="HAMAP-Rule" id="MF_00376"/>
    </source>
</evidence>
<name>COAE_BARHE</name>
<protein>
    <recommendedName>
        <fullName evidence="1">Dephospho-CoA kinase</fullName>
        <ecNumber evidence="1">2.7.1.24</ecNumber>
    </recommendedName>
    <alternativeName>
        <fullName evidence="1">Dephosphocoenzyme A kinase</fullName>
    </alternativeName>
</protein>
<feature type="chain" id="PRO_0000172908" description="Dephospho-CoA kinase">
    <location>
        <begin position="1"/>
        <end position="195"/>
    </location>
</feature>
<feature type="domain" description="DPCK" evidence="1">
    <location>
        <begin position="3"/>
        <end position="195"/>
    </location>
</feature>
<feature type="binding site" evidence="1">
    <location>
        <begin position="11"/>
        <end position="16"/>
    </location>
    <ligand>
        <name>ATP</name>
        <dbReference type="ChEBI" id="CHEBI:30616"/>
    </ligand>
</feature>
<proteinExistence type="inferred from homology"/>
<gene>
    <name evidence="1" type="primary">coaE</name>
    <name type="ordered locus">BH00040</name>
</gene>
<comment type="function">
    <text evidence="1">Catalyzes the phosphorylation of the 3'-hydroxyl group of dephosphocoenzyme A to form coenzyme A.</text>
</comment>
<comment type="catalytic activity">
    <reaction evidence="1">
        <text>3'-dephospho-CoA + ATP = ADP + CoA + H(+)</text>
        <dbReference type="Rhea" id="RHEA:18245"/>
        <dbReference type="ChEBI" id="CHEBI:15378"/>
        <dbReference type="ChEBI" id="CHEBI:30616"/>
        <dbReference type="ChEBI" id="CHEBI:57287"/>
        <dbReference type="ChEBI" id="CHEBI:57328"/>
        <dbReference type="ChEBI" id="CHEBI:456216"/>
        <dbReference type="EC" id="2.7.1.24"/>
    </reaction>
</comment>
<comment type="pathway">
    <text evidence="1">Cofactor biosynthesis; coenzyme A biosynthesis; CoA from (R)-pantothenate: step 5/5.</text>
</comment>
<comment type="subcellular location">
    <subcellularLocation>
        <location evidence="1">Cytoplasm</location>
    </subcellularLocation>
</comment>
<comment type="similarity">
    <text evidence="1">Belongs to the CoaE family.</text>
</comment>
<keyword id="KW-0067">ATP-binding</keyword>
<keyword id="KW-0173">Coenzyme A biosynthesis</keyword>
<keyword id="KW-0963">Cytoplasm</keyword>
<keyword id="KW-0418">Kinase</keyword>
<keyword id="KW-0547">Nucleotide-binding</keyword>
<keyword id="KW-0808">Transferase</keyword>
<accession>Q6G5A8</accession>
<organism>
    <name type="scientific">Bartonella henselae (strain ATCC 49882 / DSM 28221 / CCUG 30454 / Houston 1)</name>
    <name type="common">Rochalimaea henselae</name>
    <dbReference type="NCBI Taxonomy" id="283166"/>
    <lineage>
        <taxon>Bacteria</taxon>
        <taxon>Pseudomonadati</taxon>
        <taxon>Pseudomonadota</taxon>
        <taxon>Alphaproteobacteria</taxon>
        <taxon>Hyphomicrobiales</taxon>
        <taxon>Bartonellaceae</taxon>
        <taxon>Bartonella</taxon>
    </lineage>
</organism>
<sequence length="195" mass="22146">MKIIGLTGSIAMGKSTVADFFRQAGISVFSADEAVYKLYKSEPTLSLIEYKFPGVFENGKVNRQKLSEILINDNEKLQTLEKIIHPLVQEKEKKFIDTARQQGEKLVVLDIPLLLETKGEKRVDSVVVVSAPLAIQKERAMIRQNMSEKKFAFINGRQMSDEKKRARADFIIDTGKDLENTREQVLFVIKSLLKN</sequence>
<dbReference type="EC" id="2.7.1.24" evidence="1"/>
<dbReference type="EMBL" id="BX897699">
    <property type="protein sequence ID" value="CAF26820.1"/>
    <property type="molecule type" value="Genomic_DNA"/>
</dbReference>
<dbReference type="RefSeq" id="WP_011179974.1">
    <property type="nucleotide sequence ID" value="NZ_LRIJ02000001.1"/>
</dbReference>
<dbReference type="SMR" id="Q6G5A8"/>
<dbReference type="PaxDb" id="283166-BH00040"/>
<dbReference type="EnsemblBacteria" id="CAF26820">
    <property type="protein sequence ID" value="CAF26820"/>
    <property type="gene ID" value="BH00040"/>
</dbReference>
<dbReference type="GeneID" id="92986293"/>
<dbReference type="KEGG" id="bhe:BH00040"/>
<dbReference type="eggNOG" id="COG0237">
    <property type="taxonomic scope" value="Bacteria"/>
</dbReference>
<dbReference type="OrthoDB" id="9812943at2"/>
<dbReference type="UniPathway" id="UPA00241">
    <property type="reaction ID" value="UER00356"/>
</dbReference>
<dbReference type="Proteomes" id="UP000000421">
    <property type="component" value="Chromosome"/>
</dbReference>
<dbReference type="GO" id="GO:0005737">
    <property type="term" value="C:cytoplasm"/>
    <property type="evidence" value="ECO:0007669"/>
    <property type="project" value="UniProtKB-SubCell"/>
</dbReference>
<dbReference type="GO" id="GO:0005524">
    <property type="term" value="F:ATP binding"/>
    <property type="evidence" value="ECO:0007669"/>
    <property type="project" value="UniProtKB-UniRule"/>
</dbReference>
<dbReference type="GO" id="GO:0004140">
    <property type="term" value="F:dephospho-CoA kinase activity"/>
    <property type="evidence" value="ECO:0007669"/>
    <property type="project" value="UniProtKB-UniRule"/>
</dbReference>
<dbReference type="GO" id="GO:0015937">
    <property type="term" value="P:coenzyme A biosynthetic process"/>
    <property type="evidence" value="ECO:0007669"/>
    <property type="project" value="UniProtKB-UniRule"/>
</dbReference>
<dbReference type="CDD" id="cd02022">
    <property type="entry name" value="DPCK"/>
    <property type="match status" value="1"/>
</dbReference>
<dbReference type="Gene3D" id="3.40.50.300">
    <property type="entry name" value="P-loop containing nucleotide triphosphate hydrolases"/>
    <property type="match status" value="1"/>
</dbReference>
<dbReference type="HAMAP" id="MF_00376">
    <property type="entry name" value="Dephospho_CoA_kinase"/>
    <property type="match status" value="1"/>
</dbReference>
<dbReference type="InterPro" id="IPR001977">
    <property type="entry name" value="Depp_CoAkinase"/>
</dbReference>
<dbReference type="InterPro" id="IPR027417">
    <property type="entry name" value="P-loop_NTPase"/>
</dbReference>
<dbReference type="NCBIfam" id="TIGR00152">
    <property type="entry name" value="dephospho-CoA kinase"/>
    <property type="match status" value="1"/>
</dbReference>
<dbReference type="PANTHER" id="PTHR10695:SF46">
    <property type="entry name" value="BIFUNCTIONAL COENZYME A SYNTHASE-RELATED"/>
    <property type="match status" value="1"/>
</dbReference>
<dbReference type="PANTHER" id="PTHR10695">
    <property type="entry name" value="DEPHOSPHO-COA KINASE-RELATED"/>
    <property type="match status" value="1"/>
</dbReference>
<dbReference type="Pfam" id="PF01121">
    <property type="entry name" value="CoaE"/>
    <property type="match status" value="1"/>
</dbReference>
<dbReference type="SUPFAM" id="SSF52540">
    <property type="entry name" value="P-loop containing nucleoside triphosphate hydrolases"/>
    <property type="match status" value="1"/>
</dbReference>
<dbReference type="PROSITE" id="PS51219">
    <property type="entry name" value="DPCK"/>
    <property type="match status" value="1"/>
</dbReference>